<name>LON_LACP7</name>
<evidence type="ECO:0000255" key="1">
    <source>
        <dbReference type="HAMAP-Rule" id="MF_01973"/>
    </source>
</evidence>
<evidence type="ECO:0000255" key="2">
    <source>
        <dbReference type="PROSITE-ProRule" id="PRU01122"/>
    </source>
</evidence>
<evidence type="ECO:0000255" key="3">
    <source>
        <dbReference type="PROSITE-ProRule" id="PRU01123"/>
    </source>
</evidence>
<gene>
    <name evidence="1" type="primary">lon</name>
    <name type="ordered locus">Cphy_0379</name>
</gene>
<comment type="function">
    <text evidence="1">ATP-dependent serine protease that mediates the selective degradation of mutant and abnormal proteins as well as certain short-lived regulatory proteins. Required for cellular homeostasis and for survival from DNA damage and developmental changes induced by stress. Degrades polypeptides processively to yield small peptide fragments that are 5 to 10 amino acids long. Binds to DNA in a double-stranded, site-specific manner.</text>
</comment>
<comment type="catalytic activity">
    <reaction evidence="1">
        <text>Hydrolysis of proteins in presence of ATP.</text>
        <dbReference type="EC" id="3.4.21.53"/>
    </reaction>
</comment>
<comment type="subunit">
    <text evidence="1">Homohexamer. Organized in a ring with a central cavity.</text>
</comment>
<comment type="subcellular location">
    <subcellularLocation>
        <location evidence="1">Cytoplasm</location>
    </subcellularLocation>
</comment>
<comment type="induction">
    <text evidence="1">By heat shock.</text>
</comment>
<comment type="similarity">
    <text evidence="1">Belongs to the peptidase S16 family.</text>
</comment>
<feature type="chain" id="PRO_0000396549" description="Lon protease">
    <location>
        <begin position="1"/>
        <end position="809"/>
    </location>
</feature>
<feature type="domain" description="Lon N-terminal" evidence="3">
    <location>
        <begin position="8"/>
        <end position="203"/>
    </location>
</feature>
<feature type="domain" description="Lon proteolytic" evidence="2">
    <location>
        <begin position="629"/>
        <end position="809"/>
    </location>
</feature>
<feature type="active site" evidence="1">
    <location>
        <position position="716"/>
    </location>
</feature>
<feature type="active site" evidence="1">
    <location>
        <position position="759"/>
    </location>
</feature>
<feature type="binding site" evidence="1">
    <location>
        <begin position="354"/>
        <end position="361"/>
    </location>
    <ligand>
        <name>ATP</name>
        <dbReference type="ChEBI" id="CHEBI:30616"/>
    </ligand>
</feature>
<organism>
    <name type="scientific">Lachnoclostridium phytofermentans (strain ATCC 700394 / DSM 18823 / ISDg)</name>
    <name type="common">Clostridium phytofermentans</name>
    <dbReference type="NCBI Taxonomy" id="357809"/>
    <lineage>
        <taxon>Bacteria</taxon>
        <taxon>Bacillati</taxon>
        <taxon>Bacillota</taxon>
        <taxon>Clostridia</taxon>
        <taxon>Lachnospirales</taxon>
        <taxon>Lachnospiraceae</taxon>
    </lineage>
</organism>
<proteinExistence type="inferred from homology"/>
<sequence length="809" mass="90510">MSEYTRQLPVVALRNMAVMPGMLIHFDVNRKVSIEAIEAAMLLNQQVLLVSQIDAETENPTADDLYRVGTIAEIKQMIKLPGNVIRVLVTGLERATLDSLVSEQPYLKAQLTSKEAELLNLTEAEEEAMVRALRDLFEVYTTENNKLNKDIIRQVEASREIEKMVEQLSIHIPMTLEDKQLLLAASDLMEQYERLCLILADEIEVMRIKRELQNKVKDKVDKNQKDYIMREQLKVIKEELGETSSVSDIMQYLEQLKELVASDEVKEKIKKEIERFQNVAGSNSESAVARGYVETLLSLPWDKVSEDFMDLAYAKEVLETEHYGLKKVKERVLDFLAVRQLTEKGDSPIICLVGPPGTGKTSIARSIAKALNKEYVRISLGGVRDEAEIRGHRRTYVGALPGRIITGLKQAKVKNPLMLLDEIDKMSSDYKGDTASAMLEVLDSEQNCNFVDHYVEIPVDLSEVMFIATANTTQTIPKPLLDRMEIIEVSSYTENEKFHIAKNHLLNKQIEKNGLKKSQISISEKALRKIISDYTREAGVRGLERKISEVCRKIARELLEQESKENQNLIKSAKNKSNNKNQSHSEVAAAVEAEEISVTTKPSKIKVTEKNITTYLGKPKFRNEIASQKDEVGIVCGLAWTSVGGTTLQIEVNSLPGKGALILTGQMGDVMKESAQLGISYIRSLSKEYKISEEYFQKNDIHIHIPEGATPKDGPSAGITMATAMLSAITGKKVHAKVAMTGEITLRGRVLPIGGLKEKLLAAKNTGIKKVLIPEKNRPDLEELEQEITEGMEVICVATMDEVLKHALV</sequence>
<reference key="1">
    <citation type="submission" date="2007-11" db="EMBL/GenBank/DDBJ databases">
        <title>Complete genome sequence of Clostridium phytofermentans ISDg.</title>
        <authorList>
            <person name="Leschine S.B."/>
            <person name="Warnick T.A."/>
            <person name="Blanchard J.L."/>
            <person name="Schnell D.J."/>
            <person name="Petit E.L."/>
            <person name="LaTouf W.G."/>
            <person name="Copeland A."/>
            <person name="Lucas S."/>
            <person name="Lapidus A."/>
            <person name="Barry K."/>
            <person name="Glavina del Rio T."/>
            <person name="Dalin E."/>
            <person name="Tice H."/>
            <person name="Pitluck S."/>
            <person name="Kiss H."/>
            <person name="Brettin T."/>
            <person name="Bruce D."/>
            <person name="Detter J.C."/>
            <person name="Han C."/>
            <person name="Kuske C."/>
            <person name="Schmutz J."/>
            <person name="Larimer F."/>
            <person name="Land M."/>
            <person name="Hauser L."/>
            <person name="Kyrpides N."/>
            <person name="Kim E.A."/>
            <person name="Richardson P."/>
        </authorList>
    </citation>
    <scope>NUCLEOTIDE SEQUENCE [LARGE SCALE GENOMIC DNA]</scope>
    <source>
        <strain>ATCC 700394 / DSM 18823 / ISDg</strain>
    </source>
</reference>
<accession>A9KH99</accession>
<dbReference type="EC" id="3.4.21.53" evidence="1"/>
<dbReference type="EMBL" id="CP000885">
    <property type="protein sequence ID" value="ABX40766.1"/>
    <property type="molecule type" value="Genomic_DNA"/>
</dbReference>
<dbReference type="RefSeq" id="WP_012198409.1">
    <property type="nucleotide sequence ID" value="NC_010001.1"/>
</dbReference>
<dbReference type="SMR" id="A9KH99"/>
<dbReference type="STRING" id="357809.Cphy_0379"/>
<dbReference type="MEROPS" id="S16.001"/>
<dbReference type="KEGG" id="cpy:Cphy_0379"/>
<dbReference type="eggNOG" id="COG0466">
    <property type="taxonomic scope" value="Bacteria"/>
</dbReference>
<dbReference type="HOGENOM" id="CLU_004109_4_3_9"/>
<dbReference type="OrthoDB" id="9803599at2"/>
<dbReference type="Proteomes" id="UP000000370">
    <property type="component" value="Chromosome"/>
</dbReference>
<dbReference type="GO" id="GO:0005737">
    <property type="term" value="C:cytoplasm"/>
    <property type="evidence" value="ECO:0007669"/>
    <property type="project" value="UniProtKB-SubCell"/>
</dbReference>
<dbReference type="GO" id="GO:0005524">
    <property type="term" value="F:ATP binding"/>
    <property type="evidence" value="ECO:0007669"/>
    <property type="project" value="UniProtKB-UniRule"/>
</dbReference>
<dbReference type="GO" id="GO:0016887">
    <property type="term" value="F:ATP hydrolysis activity"/>
    <property type="evidence" value="ECO:0007669"/>
    <property type="project" value="UniProtKB-UniRule"/>
</dbReference>
<dbReference type="GO" id="GO:0004176">
    <property type="term" value="F:ATP-dependent peptidase activity"/>
    <property type="evidence" value="ECO:0007669"/>
    <property type="project" value="UniProtKB-UniRule"/>
</dbReference>
<dbReference type="GO" id="GO:0043565">
    <property type="term" value="F:sequence-specific DNA binding"/>
    <property type="evidence" value="ECO:0007669"/>
    <property type="project" value="UniProtKB-UniRule"/>
</dbReference>
<dbReference type="GO" id="GO:0004252">
    <property type="term" value="F:serine-type endopeptidase activity"/>
    <property type="evidence" value="ECO:0007669"/>
    <property type="project" value="UniProtKB-UniRule"/>
</dbReference>
<dbReference type="GO" id="GO:0034605">
    <property type="term" value="P:cellular response to heat"/>
    <property type="evidence" value="ECO:0007669"/>
    <property type="project" value="UniProtKB-UniRule"/>
</dbReference>
<dbReference type="GO" id="GO:0006515">
    <property type="term" value="P:protein quality control for misfolded or incompletely synthesized proteins"/>
    <property type="evidence" value="ECO:0007669"/>
    <property type="project" value="UniProtKB-UniRule"/>
</dbReference>
<dbReference type="CDD" id="cd19500">
    <property type="entry name" value="RecA-like_Lon"/>
    <property type="match status" value="1"/>
</dbReference>
<dbReference type="FunFam" id="3.40.50.300:FF:000382">
    <property type="entry name" value="Lon protease homolog 2, peroxisomal"/>
    <property type="match status" value="1"/>
</dbReference>
<dbReference type="Gene3D" id="1.10.8.60">
    <property type="match status" value="1"/>
</dbReference>
<dbReference type="Gene3D" id="1.20.5.5270">
    <property type="match status" value="1"/>
</dbReference>
<dbReference type="Gene3D" id="1.20.58.1480">
    <property type="match status" value="1"/>
</dbReference>
<dbReference type="Gene3D" id="3.30.230.10">
    <property type="match status" value="1"/>
</dbReference>
<dbReference type="Gene3D" id="2.30.130.40">
    <property type="entry name" value="LON domain-like"/>
    <property type="match status" value="1"/>
</dbReference>
<dbReference type="Gene3D" id="3.40.50.300">
    <property type="entry name" value="P-loop containing nucleotide triphosphate hydrolases"/>
    <property type="match status" value="1"/>
</dbReference>
<dbReference type="HAMAP" id="MF_01973">
    <property type="entry name" value="lon_bact"/>
    <property type="match status" value="1"/>
</dbReference>
<dbReference type="InterPro" id="IPR003593">
    <property type="entry name" value="AAA+_ATPase"/>
</dbReference>
<dbReference type="InterPro" id="IPR003959">
    <property type="entry name" value="ATPase_AAA_core"/>
</dbReference>
<dbReference type="InterPro" id="IPR027543">
    <property type="entry name" value="Lon_bac"/>
</dbReference>
<dbReference type="InterPro" id="IPR004815">
    <property type="entry name" value="Lon_bac/euk-typ"/>
</dbReference>
<dbReference type="InterPro" id="IPR054594">
    <property type="entry name" value="Lon_lid"/>
</dbReference>
<dbReference type="InterPro" id="IPR008269">
    <property type="entry name" value="Lon_proteolytic"/>
</dbReference>
<dbReference type="InterPro" id="IPR027065">
    <property type="entry name" value="Lon_Prtase"/>
</dbReference>
<dbReference type="InterPro" id="IPR003111">
    <property type="entry name" value="Lon_prtase_N"/>
</dbReference>
<dbReference type="InterPro" id="IPR046336">
    <property type="entry name" value="Lon_prtase_N_sf"/>
</dbReference>
<dbReference type="InterPro" id="IPR027417">
    <property type="entry name" value="P-loop_NTPase"/>
</dbReference>
<dbReference type="InterPro" id="IPR008268">
    <property type="entry name" value="Peptidase_S16_AS"/>
</dbReference>
<dbReference type="InterPro" id="IPR015947">
    <property type="entry name" value="PUA-like_sf"/>
</dbReference>
<dbReference type="InterPro" id="IPR020568">
    <property type="entry name" value="Ribosomal_Su5_D2-typ_SF"/>
</dbReference>
<dbReference type="InterPro" id="IPR014721">
    <property type="entry name" value="Ribsml_uS5_D2-typ_fold_subgr"/>
</dbReference>
<dbReference type="NCBIfam" id="TIGR00763">
    <property type="entry name" value="lon"/>
    <property type="match status" value="1"/>
</dbReference>
<dbReference type="PANTHER" id="PTHR43718">
    <property type="entry name" value="LON PROTEASE"/>
    <property type="match status" value="1"/>
</dbReference>
<dbReference type="PANTHER" id="PTHR43718:SF2">
    <property type="entry name" value="LON PROTEASE HOMOLOG, MITOCHONDRIAL"/>
    <property type="match status" value="1"/>
</dbReference>
<dbReference type="Pfam" id="PF00004">
    <property type="entry name" value="AAA"/>
    <property type="match status" value="1"/>
</dbReference>
<dbReference type="Pfam" id="PF05362">
    <property type="entry name" value="Lon_C"/>
    <property type="match status" value="1"/>
</dbReference>
<dbReference type="Pfam" id="PF22667">
    <property type="entry name" value="Lon_lid"/>
    <property type="match status" value="1"/>
</dbReference>
<dbReference type="Pfam" id="PF02190">
    <property type="entry name" value="LON_substr_bdg"/>
    <property type="match status" value="1"/>
</dbReference>
<dbReference type="PIRSF" id="PIRSF001174">
    <property type="entry name" value="Lon_proteas"/>
    <property type="match status" value="1"/>
</dbReference>
<dbReference type="PRINTS" id="PR00830">
    <property type="entry name" value="ENDOLAPTASE"/>
</dbReference>
<dbReference type="SMART" id="SM00382">
    <property type="entry name" value="AAA"/>
    <property type="match status" value="1"/>
</dbReference>
<dbReference type="SMART" id="SM00464">
    <property type="entry name" value="LON"/>
    <property type="match status" value="1"/>
</dbReference>
<dbReference type="SUPFAM" id="SSF52540">
    <property type="entry name" value="P-loop containing nucleoside triphosphate hydrolases"/>
    <property type="match status" value="1"/>
</dbReference>
<dbReference type="SUPFAM" id="SSF88697">
    <property type="entry name" value="PUA domain-like"/>
    <property type="match status" value="1"/>
</dbReference>
<dbReference type="SUPFAM" id="SSF54211">
    <property type="entry name" value="Ribosomal protein S5 domain 2-like"/>
    <property type="match status" value="1"/>
</dbReference>
<dbReference type="PROSITE" id="PS51787">
    <property type="entry name" value="LON_N"/>
    <property type="match status" value="1"/>
</dbReference>
<dbReference type="PROSITE" id="PS51786">
    <property type="entry name" value="LON_PROTEOLYTIC"/>
    <property type="match status" value="1"/>
</dbReference>
<dbReference type="PROSITE" id="PS01046">
    <property type="entry name" value="LON_SER"/>
    <property type="match status" value="1"/>
</dbReference>
<protein>
    <recommendedName>
        <fullName evidence="1">Lon protease</fullName>
        <ecNumber evidence="1">3.4.21.53</ecNumber>
    </recommendedName>
    <alternativeName>
        <fullName evidence="1">ATP-dependent protease La</fullName>
    </alternativeName>
</protein>
<keyword id="KW-0067">ATP-binding</keyword>
<keyword id="KW-0963">Cytoplasm</keyword>
<keyword id="KW-0378">Hydrolase</keyword>
<keyword id="KW-0547">Nucleotide-binding</keyword>
<keyword id="KW-0645">Protease</keyword>
<keyword id="KW-1185">Reference proteome</keyword>
<keyword id="KW-0720">Serine protease</keyword>
<keyword id="KW-0346">Stress response</keyword>